<gene>
    <name evidence="1" type="primary">mtnA</name>
    <name type="ordered locus">Rfer_3749</name>
</gene>
<organism>
    <name type="scientific">Albidiferax ferrireducens (strain ATCC BAA-621 / DSM 15236 / T118)</name>
    <name type="common">Rhodoferax ferrireducens</name>
    <dbReference type="NCBI Taxonomy" id="338969"/>
    <lineage>
        <taxon>Bacteria</taxon>
        <taxon>Pseudomonadati</taxon>
        <taxon>Pseudomonadota</taxon>
        <taxon>Betaproteobacteria</taxon>
        <taxon>Burkholderiales</taxon>
        <taxon>Comamonadaceae</taxon>
        <taxon>Rhodoferax</taxon>
    </lineage>
</organism>
<evidence type="ECO:0000255" key="1">
    <source>
        <dbReference type="HAMAP-Rule" id="MF_01678"/>
    </source>
</evidence>
<evidence type="ECO:0000305" key="2"/>
<dbReference type="EC" id="5.3.1.23" evidence="1"/>
<dbReference type="EMBL" id="CP000267">
    <property type="protein sequence ID" value="ABD71449.1"/>
    <property type="molecule type" value="Genomic_DNA"/>
</dbReference>
<dbReference type="RefSeq" id="WP_011466012.1">
    <property type="nucleotide sequence ID" value="NC_007908.1"/>
</dbReference>
<dbReference type="SMR" id="Q21S04"/>
<dbReference type="STRING" id="338969.Rfer_3749"/>
<dbReference type="KEGG" id="rfr:Rfer_3749"/>
<dbReference type="eggNOG" id="COG0182">
    <property type="taxonomic scope" value="Bacteria"/>
</dbReference>
<dbReference type="HOGENOM" id="CLU_016218_1_2_4"/>
<dbReference type="OrthoDB" id="9803436at2"/>
<dbReference type="UniPathway" id="UPA00904">
    <property type="reaction ID" value="UER00874"/>
</dbReference>
<dbReference type="Proteomes" id="UP000008332">
    <property type="component" value="Chromosome"/>
</dbReference>
<dbReference type="GO" id="GO:0046523">
    <property type="term" value="F:S-methyl-5-thioribose-1-phosphate isomerase activity"/>
    <property type="evidence" value="ECO:0007669"/>
    <property type="project" value="UniProtKB-UniRule"/>
</dbReference>
<dbReference type="GO" id="GO:0019509">
    <property type="term" value="P:L-methionine salvage from methylthioadenosine"/>
    <property type="evidence" value="ECO:0007669"/>
    <property type="project" value="UniProtKB-UniRule"/>
</dbReference>
<dbReference type="FunFam" id="1.20.120.420:FF:000003">
    <property type="entry name" value="Methylthioribose-1-phosphate isomerase"/>
    <property type="match status" value="1"/>
</dbReference>
<dbReference type="FunFam" id="3.40.50.10470:FF:000006">
    <property type="entry name" value="Methylthioribose-1-phosphate isomerase"/>
    <property type="match status" value="1"/>
</dbReference>
<dbReference type="Gene3D" id="1.20.120.420">
    <property type="entry name" value="translation initiation factor eif-2b, domain 1"/>
    <property type="match status" value="1"/>
</dbReference>
<dbReference type="Gene3D" id="3.40.50.10470">
    <property type="entry name" value="Translation initiation factor eif-2b, domain 2"/>
    <property type="match status" value="1"/>
</dbReference>
<dbReference type="HAMAP" id="MF_01678">
    <property type="entry name" value="Salvage_MtnA"/>
    <property type="match status" value="1"/>
</dbReference>
<dbReference type="InterPro" id="IPR000649">
    <property type="entry name" value="IF-2B-related"/>
</dbReference>
<dbReference type="InterPro" id="IPR005251">
    <property type="entry name" value="IF-M1Pi"/>
</dbReference>
<dbReference type="InterPro" id="IPR042529">
    <property type="entry name" value="IF_2B-like_C"/>
</dbReference>
<dbReference type="InterPro" id="IPR011559">
    <property type="entry name" value="Initiation_fac_2B_a/b/d"/>
</dbReference>
<dbReference type="InterPro" id="IPR027363">
    <property type="entry name" value="M1Pi_N"/>
</dbReference>
<dbReference type="InterPro" id="IPR037171">
    <property type="entry name" value="NagB/RpiA_transferase-like"/>
</dbReference>
<dbReference type="NCBIfam" id="TIGR00524">
    <property type="entry name" value="eIF-2B_rel"/>
    <property type="match status" value="1"/>
</dbReference>
<dbReference type="NCBIfam" id="NF004326">
    <property type="entry name" value="PRK05720.1"/>
    <property type="match status" value="1"/>
</dbReference>
<dbReference type="NCBIfam" id="TIGR00512">
    <property type="entry name" value="salvage_mtnA"/>
    <property type="match status" value="1"/>
</dbReference>
<dbReference type="PANTHER" id="PTHR43475">
    <property type="entry name" value="METHYLTHIORIBOSE-1-PHOSPHATE ISOMERASE"/>
    <property type="match status" value="1"/>
</dbReference>
<dbReference type="PANTHER" id="PTHR43475:SF1">
    <property type="entry name" value="METHYLTHIORIBOSE-1-PHOSPHATE ISOMERASE"/>
    <property type="match status" value="1"/>
</dbReference>
<dbReference type="Pfam" id="PF01008">
    <property type="entry name" value="IF-2B"/>
    <property type="match status" value="1"/>
</dbReference>
<dbReference type="SUPFAM" id="SSF100950">
    <property type="entry name" value="NagB/RpiA/CoA transferase-like"/>
    <property type="match status" value="1"/>
</dbReference>
<feature type="chain" id="PRO_0000357233" description="Methylthioribose-1-phosphate isomerase">
    <location>
        <begin position="1"/>
        <end position="354"/>
    </location>
</feature>
<feature type="active site" description="Proton donor" evidence="1">
    <location>
        <position position="245"/>
    </location>
</feature>
<feature type="binding site" evidence="1">
    <location>
        <begin position="54"/>
        <end position="56"/>
    </location>
    <ligand>
        <name>substrate</name>
    </ligand>
</feature>
<feature type="binding site" evidence="1">
    <location>
        <position position="97"/>
    </location>
    <ligand>
        <name>substrate</name>
    </ligand>
</feature>
<feature type="binding site" evidence="1">
    <location>
        <position position="204"/>
    </location>
    <ligand>
        <name>substrate</name>
    </ligand>
</feature>
<feature type="binding site" evidence="1">
    <location>
        <begin position="255"/>
        <end position="256"/>
    </location>
    <ligand>
        <name>substrate</name>
    </ligand>
</feature>
<feature type="site" description="Transition state stabilizer" evidence="1">
    <location>
        <position position="165"/>
    </location>
</feature>
<name>MTNA_ALBFT</name>
<reference key="1">
    <citation type="submission" date="2006-02" db="EMBL/GenBank/DDBJ databases">
        <title>Complete sequence of chromosome of Rhodoferax ferrireducens DSM 15236.</title>
        <authorList>
            <person name="Copeland A."/>
            <person name="Lucas S."/>
            <person name="Lapidus A."/>
            <person name="Barry K."/>
            <person name="Detter J.C."/>
            <person name="Glavina del Rio T."/>
            <person name="Hammon N."/>
            <person name="Israni S."/>
            <person name="Pitluck S."/>
            <person name="Brettin T."/>
            <person name="Bruce D."/>
            <person name="Han C."/>
            <person name="Tapia R."/>
            <person name="Gilna P."/>
            <person name="Kiss H."/>
            <person name="Schmutz J."/>
            <person name="Larimer F."/>
            <person name="Land M."/>
            <person name="Kyrpides N."/>
            <person name="Ivanova N."/>
            <person name="Richardson P."/>
        </authorList>
    </citation>
    <scope>NUCLEOTIDE SEQUENCE [LARGE SCALE GENOMIC DNA]</scope>
    <source>
        <strain>ATCC BAA-621 / DSM 15236 / T118</strain>
    </source>
</reference>
<proteinExistence type="inferred from homology"/>
<sequence length="354" mass="37808">MNRQDHGPAAVQTLRWREGRLEMIDQRVLPARFEYLPFTSAAEVAEGIRSMVVRGAPAIGCAAAYGVALESVQLRGATREAFAVGLQRGFDVLAASRPTAVNLFWALARMRAVWDANQHRAVGDIVDCLLAQAHEISADDVRINRAMGAYGAALLADGARVLTHCNAGALATAGHGTALGVIRSAVQAGKRISVIADETRPFLQGARLTAWEMVQENIPVTLITDNMAGHLMSRGEVDAIVVGTDRVAANGDVANKIGTYMVAVLAQRHNIPFYVACPLSTIDLAIPDGAAIPIEERAAEEVTGFRDCQWAAKGVQVRNPAFDVTPAELVTALITERGVLRQPNRTTIAGLFAT</sequence>
<accession>Q21S04</accession>
<keyword id="KW-0028">Amino-acid biosynthesis</keyword>
<keyword id="KW-0413">Isomerase</keyword>
<keyword id="KW-0486">Methionine biosynthesis</keyword>
<keyword id="KW-1185">Reference proteome</keyword>
<comment type="function">
    <text evidence="1">Catalyzes the interconversion of methylthioribose-1-phosphate (MTR-1-P) into methylthioribulose-1-phosphate (MTRu-1-P).</text>
</comment>
<comment type="catalytic activity">
    <reaction evidence="1">
        <text>5-(methylsulfanyl)-alpha-D-ribose 1-phosphate = 5-(methylsulfanyl)-D-ribulose 1-phosphate</text>
        <dbReference type="Rhea" id="RHEA:19989"/>
        <dbReference type="ChEBI" id="CHEBI:58533"/>
        <dbReference type="ChEBI" id="CHEBI:58548"/>
        <dbReference type="EC" id="5.3.1.23"/>
    </reaction>
</comment>
<comment type="pathway">
    <text evidence="1">Amino-acid biosynthesis; L-methionine biosynthesis via salvage pathway; L-methionine from S-methyl-5-thio-alpha-D-ribose 1-phosphate: step 1/6.</text>
</comment>
<comment type="similarity">
    <text evidence="2">Belongs to the eIF-2B alpha/beta/delta subunits family. MtnA subfamily.</text>
</comment>
<protein>
    <recommendedName>
        <fullName evidence="1">Methylthioribose-1-phosphate isomerase</fullName>
        <shortName evidence="1">M1Pi</shortName>
        <shortName evidence="1">MTR-1-P isomerase</shortName>
        <ecNumber evidence="1">5.3.1.23</ecNumber>
    </recommendedName>
    <alternativeName>
        <fullName evidence="1">S-methyl-5-thioribose-1-phosphate isomerase</fullName>
    </alternativeName>
</protein>